<evidence type="ECO:0000255" key="1">
    <source>
        <dbReference type="HAMAP-Rule" id="MF_01227"/>
    </source>
</evidence>
<feature type="chain" id="PRO_0000266187" description="CTP synthase">
    <location>
        <begin position="1"/>
        <end position="543"/>
    </location>
</feature>
<feature type="domain" description="Glutamine amidotransferase type-1" evidence="1">
    <location>
        <begin position="290"/>
        <end position="541"/>
    </location>
</feature>
<feature type="region of interest" description="Amidoligase domain" evidence="1">
    <location>
        <begin position="1"/>
        <end position="265"/>
    </location>
</feature>
<feature type="active site" description="Nucleophile; for glutamine hydrolysis" evidence="1">
    <location>
        <position position="378"/>
    </location>
</feature>
<feature type="active site" evidence="1">
    <location>
        <position position="514"/>
    </location>
</feature>
<feature type="active site" evidence="1">
    <location>
        <position position="516"/>
    </location>
</feature>
<feature type="binding site" evidence="1">
    <location>
        <position position="13"/>
    </location>
    <ligand>
        <name>CTP</name>
        <dbReference type="ChEBI" id="CHEBI:37563"/>
        <note>allosteric inhibitor</note>
    </ligand>
</feature>
<feature type="binding site" evidence="1">
    <location>
        <position position="13"/>
    </location>
    <ligand>
        <name>UTP</name>
        <dbReference type="ChEBI" id="CHEBI:46398"/>
    </ligand>
</feature>
<feature type="binding site" evidence="1">
    <location>
        <begin position="14"/>
        <end position="19"/>
    </location>
    <ligand>
        <name>ATP</name>
        <dbReference type="ChEBI" id="CHEBI:30616"/>
    </ligand>
</feature>
<feature type="binding site" evidence="1">
    <location>
        <position position="71"/>
    </location>
    <ligand>
        <name>ATP</name>
        <dbReference type="ChEBI" id="CHEBI:30616"/>
    </ligand>
</feature>
<feature type="binding site" evidence="1">
    <location>
        <position position="71"/>
    </location>
    <ligand>
        <name>Mg(2+)</name>
        <dbReference type="ChEBI" id="CHEBI:18420"/>
    </ligand>
</feature>
<feature type="binding site" evidence="1">
    <location>
        <position position="139"/>
    </location>
    <ligand>
        <name>Mg(2+)</name>
        <dbReference type="ChEBI" id="CHEBI:18420"/>
    </ligand>
</feature>
<feature type="binding site" evidence="1">
    <location>
        <begin position="146"/>
        <end position="148"/>
    </location>
    <ligand>
        <name>CTP</name>
        <dbReference type="ChEBI" id="CHEBI:37563"/>
        <note>allosteric inhibitor</note>
    </ligand>
</feature>
<feature type="binding site" evidence="1">
    <location>
        <begin position="186"/>
        <end position="191"/>
    </location>
    <ligand>
        <name>CTP</name>
        <dbReference type="ChEBI" id="CHEBI:37563"/>
        <note>allosteric inhibitor</note>
    </ligand>
</feature>
<feature type="binding site" evidence="1">
    <location>
        <begin position="186"/>
        <end position="191"/>
    </location>
    <ligand>
        <name>UTP</name>
        <dbReference type="ChEBI" id="CHEBI:46398"/>
    </ligand>
</feature>
<feature type="binding site" evidence="1">
    <location>
        <position position="222"/>
    </location>
    <ligand>
        <name>CTP</name>
        <dbReference type="ChEBI" id="CHEBI:37563"/>
        <note>allosteric inhibitor</note>
    </ligand>
</feature>
<feature type="binding site" evidence="1">
    <location>
        <position position="222"/>
    </location>
    <ligand>
        <name>UTP</name>
        <dbReference type="ChEBI" id="CHEBI:46398"/>
    </ligand>
</feature>
<feature type="binding site" evidence="1">
    <location>
        <position position="351"/>
    </location>
    <ligand>
        <name>L-glutamine</name>
        <dbReference type="ChEBI" id="CHEBI:58359"/>
    </ligand>
</feature>
<feature type="binding site" evidence="1">
    <location>
        <begin position="379"/>
        <end position="382"/>
    </location>
    <ligand>
        <name>L-glutamine</name>
        <dbReference type="ChEBI" id="CHEBI:58359"/>
    </ligand>
</feature>
<feature type="binding site" evidence="1">
    <location>
        <position position="402"/>
    </location>
    <ligand>
        <name>L-glutamine</name>
        <dbReference type="ChEBI" id="CHEBI:58359"/>
    </ligand>
</feature>
<feature type="binding site" evidence="1">
    <location>
        <position position="469"/>
    </location>
    <ligand>
        <name>L-glutamine</name>
        <dbReference type="ChEBI" id="CHEBI:58359"/>
    </ligand>
</feature>
<name>PYRG_PSE14</name>
<gene>
    <name evidence="1" type="primary">pyrG</name>
    <name type="ordered locus">PSPPH_3822</name>
</gene>
<comment type="function">
    <text evidence="1">Catalyzes the ATP-dependent amination of UTP to CTP with either L-glutamine or ammonia as the source of nitrogen. Regulates intracellular CTP levels through interactions with the four ribonucleotide triphosphates.</text>
</comment>
<comment type="catalytic activity">
    <reaction evidence="1">
        <text>UTP + L-glutamine + ATP + H2O = CTP + L-glutamate + ADP + phosphate + 2 H(+)</text>
        <dbReference type="Rhea" id="RHEA:26426"/>
        <dbReference type="ChEBI" id="CHEBI:15377"/>
        <dbReference type="ChEBI" id="CHEBI:15378"/>
        <dbReference type="ChEBI" id="CHEBI:29985"/>
        <dbReference type="ChEBI" id="CHEBI:30616"/>
        <dbReference type="ChEBI" id="CHEBI:37563"/>
        <dbReference type="ChEBI" id="CHEBI:43474"/>
        <dbReference type="ChEBI" id="CHEBI:46398"/>
        <dbReference type="ChEBI" id="CHEBI:58359"/>
        <dbReference type="ChEBI" id="CHEBI:456216"/>
        <dbReference type="EC" id="6.3.4.2"/>
    </reaction>
</comment>
<comment type="catalytic activity">
    <reaction evidence="1">
        <text>L-glutamine + H2O = L-glutamate + NH4(+)</text>
        <dbReference type="Rhea" id="RHEA:15889"/>
        <dbReference type="ChEBI" id="CHEBI:15377"/>
        <dbReference type="ChEBI" id="CHEBI:28938"/>
        <dbReference type="ChEBI" id="CHEBI:29985"/>
        <dbReference type="ChEBI" id="CHEBI:58359"/>
    </reaction>
</comment>
<comment type="catalytic activity">
    <reaction evidence="1">
        <text>UTP + NH4(+) + ATP = CTP + ADP + phosphate + 2 H(+)</text>
        <dbReference type="Rhea" id="RHEA:16597"/>
        <dbReference type="ChEBI" id="CHEBI:15378"/>
        <dbReference type="ChEBI" id="CHEBI:28938"/>
        <dbReference type="ChEBI" id="CHEBI:30616"/>
        <dbReference type="ChEBI" id="CHEBI:37563"/>
        <dbReference type="ChEBI" id="CHEBI:43474"/>
        <dbReference type="ChEBI" id="CHEBI:46398"/>
        <dbReference type="ChEBI" id="CHEBI:456216"/>
    </reaction>
</comment>
<comment type="activity regulation">
    <text evidence="1">Allosterically activated by GTP, when glutamine is the substrate; GTP has no effect on the reaction when ammonia is the substrate. The allosteric effector GTP functions by stabilizing the protein conformation that binds the tetrahedral intermediate(s) formed during glutamine hydrolysis. Inhibited by the product CTP, via allosteric rather than competitive inhibition.</text>
</comment>
<comment type="pathway">
    <text evidence="1">Pyrimidine metabolism; CTP biosynthesis via de novo pathway; CTP from UDP: step 2/2.</text>
</comment>
<comment type="subunit">
    <text evidence="1">Homotetramer.</text>
</comment>
<comment type="miscellaneous">
    <text evidence="1">CTPSs have evolved a hybrid strategy for distinguishing between UTP and CTP. The overlapping regions of the product feedback inhibitory and substrate sites recognize a common feature in both compounds, the triphosphate moiety. To differentiate isosteric substrate and product pyrimidine rings, an additional pocket far from the expected kinase/ligase catalytic site, specifically recognizes the cytosine and ribose portions of the product inhibitor.</text>
</comment>
<comment type="similarity">
    <text evidence="1">Belongs to the CTP synthase family.</text>
</comment>
<keyword id="KW-0067">ATP-binding</keyword>
<keyword id="KW-0315">Glutamine amidotransferase</keyword>
<keyword id="KW-0436">Ligase</keyword>
<keyword id="KW-0460">Magnesium</keyword>
<keyword id="KW-0479">Metal-binding</keyword>
<keyword id="KW-0547">Nucleotide-binding</keyword>
<keyword id="KW-0665">Pyrimidine biosynthesis</keyword>
<accession>Q48F77</accession>
<proteinExistence type="inferred from homology"/>
<reference key="1">
    <citation type="journal article" date="2005" name="J. Bacteriol.">
        <title>Whole-genome sequence analysis of Pseudomonas syringae pv. phaseolicola 1448A reveals divergence among pathovars in genes involved in virulence and transposition.</title>
        <authorList>
            <person name="Joardar V."/>
            <person name="Lindeberg M."/>
            <person name="Jackson R.W."/>
            <person name="Selengut J."/>
            <person name="Dodson R."/>
            <person name="Brinkac L.M."/>
            <person name="Daugherty S.C."/>
            <person name="DeBoy R.T."/>
            <person name="Durkin A.S."/>
            <person name="Gwinn Giglio M."/>
            <person name="Madupu R."/>
            <person name="Nelson W.C."/>
            <person name="Rosovitz M.J."/>
            <person name="Sullivan S.A."/>
            <person name="Crabtree J."/>
            <person name="Creasy T."/>
            <person name="Davidsen T.M."/>
            <person name="Haft D.H."/>
            <person name="Zafar N."/>
            <person name="Zhou L."/>
            <person name="Halpin R."/>
            <person name="Holley T."/>
            <person name="Khouri H.M."/>
            <person name="Feldblyum T.V."/>
            <person name="White O."/>
            <person name="Fraser C.M."/>
            <person name="Chatterjee A.K."/>
            <person name="Cartinhour S."/>
            <person name="Schneider D."/>
            <person name="Mansfield J.W."/>
            <person name="Collmer A."/>
            <person name="Buell R."/>
        </authorList>
    </citation>
    <scope>NUCLEOTIDE SEQUENCE [LARGE SCALE GENOMIC DNA]</scope>
    <source>
        <strain>1448A / Race 6</strain>
    </source>
</reference>
<sequence length="543" mass="59794">MTRYIFVTGGVVSSLGKGIASASLAAILEARGLKVTMLKLDPYINVDPGTMSPFQHGEVFVTHDGAETDLDLGHYERFIRTTMTQNNNFTTGRVYEHVLRKERRGDYLGATIQVIPHITDEIKRRIIKGAGDADVALVEIGGTVGDIESQPFLEAIRQLRFEVGARRAMLMHLTLVPYIATAGETKTKPTQHSVKELRSIGLQPDVLVCRSDHPIDVSSRRKIAQFTNVEERAVIALEDADTIYKIPGILHSQGLDDFVVERFGLQCEGADLSEWDKVVDAKLNPEHEVTIAMVGKYMELLDAYKSLIEAMSHAGITNRTKVNLRYIDSEDIENQGTGLLEGVDAILVPGGFGLRGVEGKITAVQFARENKVPYLGICLGMQVAVIEFARNVLGWKDANSTEFNRTSAHAVVGLITEWEDATGAVETRTESSDLGGTMRLGAQDCQLEAGSLVHDCYRKDVIVERHRHRYEVNNNLLPQLIEAGLKISGRSGDGALVEVVEAPDHPWFVACQFHPEFTSTPRDGHPLFSGFVKAALAQHQKNS</sequence>
<protein>
    <recommendedName>
        <fullName evidence="1">CTP synthase</fullName>
        <ecNumber evidence="1">6.3.4.2</ecNumber>
    </recommendedName>
    <alternativeName>
        <fullName evidence="1">Cytidine 5'-triphosphate synthase</fullName>
    </alternativeName>
    <alternativeName>
        <fullName evidence="1">Cytidine triphosphate synthetase</fullName>
        <shortName evidence="1">CTP synthetase</shortName>
        <shortName evidence="1">CTPS</shortName>
    </alternativeName>
    <alternativeName>
        <fullName evidence="1">UTP--ammonia ligase</fullName>
    </alternativeName>
</protein>
<dbReference type="EC" id="6.3.4.2" evidence="1"/>
<dbReference type="EMBL" id="CP000058">
    <property type="protein sequence ID" value="AAZ37327.1"/>
    <property type="molecule type" value="Genomic_DNA"/>
</dbReference>
<dbReference type="RefSeq" id="WP_002554712.1">
    <property type="nucleotide sequence ID" value="NC_005773.3"/>
</dbReference>
<dbReference type="SMR" id="Q48F77"/>
<dbReference type="MEROPS" id="C26.964"/>
<dbReference type="KEGG" id="psp:PSPPH_3822"/>
<dbReference type="eggNOG" id="COG0504">
    <property type="taxonomic scope" value="Bacteria"/>
</dbReference>
<dbReference type="HOGENOM" id="CLU_011675_5_0_6"/>
<dbReference type="UniPathway" id="UPA00159">
    <property type="reaction ID" value="UER00277"/>
</dbReference>
<dbReference type="Proteomes" id="UP000000551">
    <property type="component" value="Chromosome"/>
</dbReference>
<dbReference type="GO" id="GO:0005829">
    <property type="term" value="C:cytosol"/>
    <property type="evidence" value="ECO:0007669"/>
    <property type="project" value="TreeGrafter"/>
</dbReference>
<dbReference type="GO" id="GO:0005524">
    <property type="term" value="F:ATP binding"/>
    <property type="evidence" value="ECO:0007669"/>
    <property type="project" value="UniProtKB-KW"/>
</dbReference>
<dbReference type="GO" id="GO:0003883">
    <property type="term" value="F:CTP synthase activity"/>
    <property type="evidence" value="ECO:0007669"/>
    <property type="project" value="UniProtKB-UniRule"/>
</dbReference>
<dbReference type="GO" id="GO:0004359">
    <property type="term" value="F:glutaminase activity"/>
    <property type="evidence" value="ECO:0007669"/>
    <property type="project" value="RHEA"/>
</dbReference>
<dbReference type="GO" id="GO:0042802">
    <property type="term" value="F:identical protein binding"/>
    <property type="evidence" value="ECO:0007669"/>
    <property type="project" value="TreeGrafter"/>
</dbReference>
<dbReference type="GO" id="GO:0046872">
    <property type="term" value="F:metal ion binding"/>
    <property type="evidence" value="ECO:0007669"/>
    <property type="project" value="UniProtKB-KW"/>
</dbReference>
<dbReference type="GO" id="GO:0044210">
    <property type="term" value="P:'de novo' CTP biosynthetic process"/>
    <property type="evidence" value="ECO:0007669"/>
    <property type="project" value="UniProtKB-UniRule"/>
</dbReference>
<dbReference type="GO" id="GO:0019856">
    <property type="term" value="P:pyrimidine nucleobase biosynthetic process"/>
    <property type="evidence" value="ECO:0007669"/>
    <property type="project" value="TreeGrafter"/>
</dbReference>
<dbReference type="CDD" id="cd03113">
    <property type="entry name" value="CTPS_N"/>
    <property type="match status" value="1"/>
</dbReference>
<dbReference type="CDD" id="cd01746">
    <property type="entry name" value="GATase1_CTP_Synthase"/>
    <property type="match status" value="1"/>
</dbReference>
<dbReference type="FunFam" id="3.40.50.300:FF:000009">
    <property type="entry name" value="CTP synthase"/>
    <property type="match status" value="1"/>
</dbReference>
<dbReference type="FunFam" id="3.40.50.880:FF:000002">
    <property type="entry name" value="CTP synthase"/>
    <property type="match status" value="1"/>
</dbReference>
<dbReference type="Gene3D" id="3.40.50.880">
    <property type="match status" value="1"/>
</dbReference>
<dbReference type="Gene3D" id="3.40.50.300">
    <property type="entry name" value="P-loop containing nucleotide triphosphate hydrolases"/>
    <property type="match status" value="1"/>
</dbReference>
<dbReference type="HAMAP" id="MF_01227">
    <property type="entry name" value="PyrG"/>
    <property type="match status" value="1"/>
</dbReference>
<dbReference type="InterPro" id="IPR029062">
    <property type="entry name" value="Class_I_gatase-like"/>
</dbReference>
<dbReference type="InterPro" id="IPR004468">
    <property type="entry name" value="CTP_synthase"/>
</dbReference>
<dbReference type="InterPro" id="IPR017456">
    <property type="entry name" value="CTP_synthase_N"/>
</dbReference>
<dbReference type="InterPro" id="IPR017926">
    <property type="entry name" value="GATASE"/>
</dbReference>
<dbReference type="InterPro" id="IPR033828">
    <property type="entry name" value="GATase1_CTP_Synthase"/>
</dbReference>
<dbReference type="InterPro" id="IPR027417">
    <property type="entry name" value="P-loop_NTPase"/>
</dbReference>
<dbReference type="NCBIfam" id="NF003792">
    <property type="entry name" value="PRK05380.1"/>
    <property type="match status" value="1"/>
</dbReference>
<dbReference type="NCBIfam" id="TIGR00337">
    <property type="entry name" value="PyrG"/>
    <property type="match status" value="1"/>
</dbReference>
<dbReference type="PANTHER" id="PTHR11550">
    <property type="entry name" value="CTP SYNTHASE"/>
    <property type="match status" value="1"/>
</dbReference>
<dbReference type="PANTHER" id="PTHR11550:SF0">
    <property type="entry name" value="CTP SYNTHASE-RELATED"/>
    <property type="match status" value="1"/>
</dbReference>
<dbReference type="Pfam" id="PF06418">
    <property type="entry name" value="CTP_synth_N"/>
    <property type="match status" value="1"/>
</dbReference>
<dbReference type="Pfam" id="PF00117">
    <property type="entry name" value="GATase"/>
    <property type="match status" value="1"/>
</dbReference>
<dbReference type="SUPFAM" id="SSF52317">
    <property type="entry name" value="Class I glutamine amidotransferase-like"/>
    <property type="match status" value="1"/>
</dbReference>
<dbReference type="SUPFAM" id="SSF52540">
    <property type="entry name" value="P-loop containing nucleoside triphosphate hydrolases"/>
    <property type="match status" value="1"/>
</dbReference>
<dbReference type="PROSITE" id="PS51273">
    <property type="entry name" value="GATASE_TYPE_1"/>
    <property type="match status" value="1"/>
</dbReference>
<organism>
    <name type="scientific">Pseudomonas savastanoi pv. phaseolicola (strain 1448A / Race 6)</name>
    <name type="common">Pseudomonas syringae pv. phaseolicola (strain 1448A / Race 6)</name>
    <dbReference type="NCBI Taxonomy" id="264730"/>
    <lineage>
        <taxon>Bacteria</taxon>
        <taxon>Pseudomonadati</taxon>
        <taxon>Pseudomonadota</taxon>
        <taxon>Gammaproteobacteria</taxon>
        <taxon>Pseudomonadales</taxon>
        <taxon>Pseudomonadaceae</taxon>
        <taxon>Pseudomonas</taxon>
    </lineage>
</organism>